<gene>
    <name evidence="1" type="primary">ubiG</name>
    <name type="ordered locus">Spea_2066</name>
</gene>
<dbReference type="EC" id="2.1.1.222" evidence="1"/>
<dbReference type="EC" id="2.1.1.64" evidence="1"/>
<dbReference type="EMBL" id="CP000851">
    <property type="protein sequence ID" value="ABV87386.1"/>
    <property type="molecule type" value="Genomic_DNA"/>
</dbReference>
<dbReference type="RefSeq" id="WP_012155302.1">
    <property type="nucleotide sequence ID" value="NC_009901.1"/>
</dbReference>
<dbReference type="SMR" id="A8H499"/>
<dbReference type="STRING" id="398579.Spea_2066"/>
<dbReference type="KEGG" id="spl:Spea_2066"/>
<dbReference type="eggNOG" id="COG2227">
    <property type="taxonomic scope" value="Bacteria"/>
</dbReference>
<dbReference type="HOGENOM" id="CLU_042432_5_0_6"/>
<dbReference type="OrthoDB" id="9801538at2"/>
<dbReference type="UniPathway" id="UPA00232"/>
<dbReference type="Proteomes" id="UP000002608">
    <property type="component" value="Chromosome"/>
</dbReference>
<dbReference type="GO" id="GO:0102208">
    <property type="term" value="F:2-polyprenyl-6-hydroxyphenol methylase activity"/>
    <property type="evidence" value="ECO:0007669"/>
    <property type="project" value="UniProtKB-EC"/>
</dbReference>
<dbReference type="GO" id="GO:0061542">
    <property type="term" value="F:3-demethylubiquinol 3-O-methyltransferase activity"/>
    <property type="evidence" value="ECO:0007669"/>
    <property type="project" value="UniProtKB-UniRule"/>
</dbReference>
<dbReference type="GO" id="GO:0010420">
    <property type="term" value="F:polyprenyldihydroxybenzoate methyltransferase activity"/>
    <property type="evidence" value="ECO:0007669"/>
    <property type="project" value="InterPro"/>
</dbReference>
<dbReference type="GO" id="GO:0032259">
    <property type="term" value="P:methylation"/>
    <property type="evidence" value="ECO:0007669"/>
    <property type="project" value="UniProtKB-KW"/>
</dbReference>
<dbReference type="CDD" id="cd02440">
    <property type="entry name" value="AdoMet_MTases"/>
    <property type="match status" value="1"/>
</dbReference>
<dbReference type="FunFam" id="3.40.50.150:FF:000028">
    <property type="entry name" value="Ubiquinone biosynthesis O-methyltransferase"/>
    <property type="match status" value="1"/>
</dbReference>
<dbReference type="Gene3D" id="3.40.50.150">
    <property type="entry name" value="Vaccinia Virus protein VP39"/>
    <property type="match status" value="1"/>
</dbReference>
<dbReference type="HAMAP" id="MF_00472">
    <property type="entry name" value="UbiG"/>
    <property type="match status" value="1"/>
</dbReference>
<dbReference type="InterPro" id="IPR029063">
    <property type="entry name" value="SAM-dependent_MTases_sf"/>
</dbReference>
<dbReference type="InterPro" id="IPR010233">
    <property type="entry name" value="UbiG_MeTrfase"/>
</dbReference>
<dbReference type="NCBIfam" id="TIGR01983">
    <property type="entry name" value="UbiG"/>
    <property type="match status" value="1"/>
</dbReference>
<dbReference type="PANTHER" id="PTHR43464">
    <property type="entry name" value="METHYLTRANSFERASE"/>
    <property type="match status" value="1"/>
</dbReference>
<dbReference type="PANTHER" id="PTHR43464:SF19">
    <property type="entry name" value="UBIQUINONE BIOSYNTHESIS O-METHYLTRANSFERASE, MITOCHONDRIAL"/>
    <property type="match status" value="1"/>
</dbReference>
<dbReference type="Pfam" id="PF13489">
    <property type="entry name" value="Methyltransf_23"/>
    <property type="match status" value="1"/>
</dbReference>
<dbReference type="SUPFAM" id="SSF53335">
    <property type="entry name" value="S-adenosyl-L-methionine-dependent methyltransferases"/>
    <property type="match status" value="1"/>
</dbReference>
<comment type="function">
    <text evidence="1">O-methyltransferase that catalyzes the 2 O-methylation steps in the ubiquinone biosynthetic pathway.</text>
</comment>
<comment type="catalytic activity">
    <reaction evidence="1">
        <text>a 3-demethylubiquinol + S-adenosyl-L-methionine = a ubiquinol + S-adenosyl-L-homocysteine + H(+)</text>
        <dbReference type="Rhea" id="RHEA:44380"/>
        <dbReference type="Rhea" id="RHEA-COMP:9566"/>
        <dbReference type="Rhea" id="RHEA-COMP:10914"/>
        <dbReference type="ChEBI" id="CHEBI:15378"/>
        <dbReference type="ChEBI" id="CHEBI:17976"/>
        <dbReference type="ChEBI" id="CHEBI:57856"/>
        <dbReference type="ChEBI" id="CHEBI:59789"/>
        <dbReference type="ChEBI" id="CHEBI:84422"/>
        <dbReference type="EC" id="2.1.1.64"/>
    </reaction>
</comment>
<comment type="catalytic activity">
    <reaction evidence="1">
        <text>a 3-(all-trans-polyprenyl)benzene-1,2-diol + S-adenosyl-L-methionine = a 2-methoxy-6-(all-trans-polyprenyl)phenol + S-adenosyl-L-homocysteine + H(+)</text>
        <dbReference type="Rhea" id="RHEA:31411"/>
        <dbReference type="Rhea" id="RHEA-COMP:9550"/>
        <dbReference type="Rhea" id="RHEA-COMP:9551"/>
        <dbReference type="ChEBI" id="CHEBI:15378"/>
        <dbReference type="ChEBI" id="CHEBI:57856"/>
        <dbReference type="ChEBI" id="CHEBI:59789"/>
        <dbReference type="ChEBI" id="CHEBI:62729"/>
        <dbReference type="ChEBI" id="CHEBI:62731"/>
        <dbReference type="EC" id="2.1.1.222"/>
    </reaction>
</comment>
<comment type="pathway">
    <text evidence="1">Cofactor biosynthesis; ubiquinone biosynthesis.</text>
</comment>
<comment type="similarity">
    <text evidence="1">Belongs to the methyltransferase superfamily. UbiG/COQ3 family.</text>
</comment>
<keyword id="KW-0489">Methyltransferase</keyword>
<keyword id="KW-1185">Reference proteome</keyword>
<keyword id="KW-0949">S-adenosyl-L-methionine</keyword>
<keyword id="KW-0808">Transferase</keyword>
<keyword id="KW-0831">Ubiquinone biosynthesis</keyword>
<organism>
    <name type="scientific">Shewanella pealeana (strain ATCC 700345 / ANG-SQ1)</name>
    <dbReference type="NCBI Taxonomy" id="398579"/>
    <lineage>
        <taxon>Bacteria</taxon>
        <taxon>Pseudomonadati</taxon>
        <taxon>Pseudomonadota</taxon>
        <taxon>Gammaproteobacteria</taxon>
        <taxon>Alteromonadales</taxon>
        <taxon>Shewanellaceae</taxon>
        <taxon>Shewanella</taxon>
    </lineage>
</organism>
<reference key="1">
    <citation type="submission" date="2007-10" db="EMBL/GenBank/DDBJ databases">
        <title>Complete sequence of Shewanella pealeana ATCC 700345.</title>
        <authorList>
            <consortium name="US DOE Joint Genome Institute"/>
            <person name="Copeland A."/>
            <person name="Lucas S."/>
            <person name="Lapidus A."/>
            <person name="Barry K."/>
            <person name="Glavina del Rio T."/>
            <person name="Dalin E."/>
            <person name="Tice H."/>
            <person name="Pitluck S."/>
            <person name="Chertkov O."/>
            <person name="Brettin T."/>
            <person name="Bruce D."/>
            <person name="Detter J.C."/>
            <person name="Han C."/>
            <person name="Schmutz J."/>
            <person name="Larimer F."/>
            <person name="Land M."/>
            <person name="Hauser L."/>
            <person name="Kyrpides N."/>
            <person name="Kim E."/>
            <person name="Zhao J.-S.Z."/>
            <person name="Manno D."/>
            <person name="Hawari J."/>
            <person name="Richardson P."/>
        </authorList>
    </citation>
    <scope>NUCLEOTIDE SEQUENCE [LARGE SCALE GENOMIC DNA]</scope>
    <source>
        <strain>ATCC 700345 / ANG-SQ1</strain>
    </source>
</reference>
<sequence>MQTHNNVDPQEIAKFEKMAATWWDPKGEFKPLHNLNPLRLNYIDQTAGGIFGKQVLDVGCGGGILSESMARIGANVTGLDMGDEPLDVARLHALETGVEINYIKNTAEAHRDEHRGQYDVVTCMEMLEHVPNPSSVIQACADMVKPGGYVFFSTINRNLRAYVETILGAEYLLKMLPIGTHDHNKFIRPSELIDLADNAELFCKDAVGITYNPITDIFRYTKSLEVNYMIATVKND</sequence>
<feature type="chain" id="PRO_1000081227" description="Ubiquinone biosynthesis O-methyltransferase">
    <location>
        <begin position="1"/>
        <end position="236"/>
    </location>
</feature>
<feature type="binding site" evidence="1">
    <location>
        <position position="39"/>
    </location>
    <ligand>
        <name>S-adenosyl-L-methionine</name>
        <dbReference type="ChEBI" id="CHEBI:59789"/>
    </ligand>
</feature>
<feature type="binding site" evidence="1">
    <location>
        <position position="59"/>
    </location>
    <ligand>
        <name>S-adenosyl-L-methionine</name>
        <dbReference type="ChEBI" id="CHEBI:59789"/>
    </ligand>
</feature>
<feature type="binding site" evidence="1">
    <location>
        <position position="80"/>
    </location>
    <ligand>
        <name>S-adenosyl-L-methionine</name>
        <dbReference type="ChEBI" id="CHEBI:59789"/>
    </ligand>
</feature>
<feature type="binding site" evidence="1">
    <location>
        <position position="124"/>
    </location>
    <ligand>
        <name>S-adenosyl-L-methionine</name>
        <dbReference type="ChEBI" id="CHEBI:59789"/>
    </ligand>
</feature>
<proteinExistence type="inferred from homology"/>
<protein>
    <recommendedName>
        <fullName evidence="1">Ubiquinone biosynthesis O-methyltransferase</fullName>
    </recommendedName>
    <alternativeName>
        <fullName evidence="1">2-polyprenyl-6-hydroxyphenol methylase</fullName>
        <ecNumber evidence="1">2.1.1.222</ecNumber>
    </alternativeName>
    <alternativeName>
        <fullName evidence="1">3-demethylubiquinone 3-O-methyltransferase</fullName>
        <ecNumber evidence="1">2.1.1.64</ecNumber>
    </alternativeName>
</protein>
<evidence type="ECO:0000255" key="1">
    <source>
        <dbReference type="HAMAP-Rule" id="MF_00472"/>
    </source>
</evidence>
<accession>A8H499</accession>
<name>UBIG_SHEPA</name>